<sequence>MSIKTEEISSLIKKQLANYQDKVSVEETGTVTYVGDGVARADGLDNAMAGELLEFSNGVYGMAQNLESNDVGIVILGDYTGIREGDTVKRTGRIMEVPVGDALLGRVVDSLGRPIDGLGEIKTDKTRPIERKAPGVMERKSVSVPLQTGIKVIDALVPIGRGQRELIIGDRKTGKTAIALDTIINQKNQDVICIYVAIGQKESTVRASVETLRKYGALDYTIVVSASASNPAPMLYIAPYAGAAMGEEFMFNGKDVLIVYDDLSKQADAYRELSLILRRPPGREAYPGDIFYTHSRLLERAARLSDDLGGGSMTALPIIQTQAGDVSAYIPTNVISITDGQIFLDSDEFYAGQRPAIDAGTSVSRVGGDAQIKAMKKVAGTLRLDIASYNELASFAQFGSDLDAATQAKLARGQRTMEVLKQGLHDPLPVEEQVVTLFALSRGFIDKVEIEDVQRYESELAAYMHANHQDLYDTIKKTGKLPEGDDLQNAVAKFSETFQGTKKQVAEEK</sequence>
<proteinExistence type="inferred from homology"/>
<keyword id="KW-0066">ATP synthesis</keyword>
<keyword id="KW-0067">ATP-binding</keyword>
<keyword id="KW-1003">Cell membrane</keyword>
<keyword id="KW-0139">CF(1)</keyword>
<keyword id="KW-0375">Hydrogen ion transport</keyword>
<keyword id="KW-0406">Ion transport</keyword>
<keyword id="KW-0472">Membrane</keyword>
<keyword id="KW-0547">Nucleotide-binding</keyword>
<keyword id="KW-1278">Translocase</keyword>
<keyword id="KW-0813">Transport</keyword>
<accession>B2G689</accession>
<organism>
    <name type="scientific">Limosilactobacillus reuteri subsp. reuteri (strain JCM 1112)</name>
    <name type="common">Lactobacillus reuteri</name>
    <dbReference type="NCBI Taxonomy" id="557433"/>
    <lineage>
        <taxon>Bacteria</taxon>
        <taxon>Bacillati</taxon>
        <taxon>Bacillota</taxon>
        <taxon>Bacilli</taxon>
        <taxon>Lactobacillales</taxon>
        <taxon>Lactobacillaceae</taxon>
        <taxon>Limosilactobacillus</taxon>
    </lineage>
</organism>
<evidence type="ECO:0000255" key="1">
    <source>
        <dbReference type="HAMAP-Rule" id="MF_01346"/>
    </source>
</evidence>
<dbReference type="EC" id="7.1.2.2" evidence="1"/>
<dbReference type="EMBL" id="AP007281">
    <property type="protein sequence ID" value="BAG24971.1"/>
    <property type="molecule type" value="Genomic_DNA"/>
</dbReference>
<dbReference type="RefSeq" id="WP_003666568.1">
    <property type="nucleotide sequence ID" value="NC_010609.1"/>
</dbReference>
<dbReference type="SMR" id="B2G689"/>
<dbReference type="GeneID" id="77192080"/>
<dbReference type="KEGG" id="lrf:LAR_0455"/>
<dbReference type="HOGENOM" id="CLU_010091_2_1_9"/>
<dbReference type="GO" id="GO:0005886">
    <property type="term" value="C:plasma membrane"/>
    <property type="evidence" value="ECO:0007669"/>
    <property type="project" value="UniProtKB-SubCell"/>
</dbReference>
<dbReference type="GO" id="GO:0045259">
    <property type="term" value="C:proton-transporting ATP synthase complex"/>
    <property type="evidence" value="ECO:0007669"/>
    <property type="project" value="UniProtKB-KW"/>
</dbReference>
<dbReference type="GO" id="GO:0043531">
    <property type="term" value="F:ADP binding"/>
    <property type="evidence" value="ECO:0007669"/>
    <property type="project" value="TreeGrafter"/>
</dbReference>
<dbReference type="GO" id="GO:0005524">
    <property type="term" value="F:ATP binding"/>
    <property type="evidence" value="ECO:0007669"/>
    <property type="project" value="UniProtKB-UniRule"/>
</dbReference>
<dbReference type="GO" id="GO:0046933">
    <property type="term" value="F:proton-transporting ATP synthase activity, rotational mechanism"/>
    <property type="evidence" value="ECO:0007669"/>
    <property type="project" value="UniProtKB-UniRule"/>
</dbReference>
<dbReference type="CDD" id="cd18113">
    <property type="entry name" value="ATP-synt_F1_alpha_C"/>
    <property type="match status" value="1"/>
</dbReference>
<dbReference type="CDD" id="cd18116">
    <property type="entry name" value="ATP-synt_F1_alpha_N"/>
    <property type="match status" value="1"/>
</dbReference>
<dbReference type="CDD" id="cd01132">
    <property type="entry name" value="F1-ATPase_alpha_CD"/>
    <property type="match status" value="1"/>
</dbReference>
<dbReference type="FunFam" id="1.20.150.20:FF:000001">
    <property type="entry name" value="ATP synthase subunit alpha"/>
    <property type="match status" value="1"/>
</dbReference>
<dbReference type="FunFam" id="2.40.30.20:FF:000001">
    <property type="entry name" value="ATP synthase subunit alpha"/>
    <property type="match status" value="1"/>
</dbReference>
<dbReference type="FunFam" id="3.40.50.300:FF:000002">
    <property type="entry name" value="ATP synthase subunit alpha"/>
    <property type="match status" value="1"/>
</dbReference>
<dbReference type="Gene3D" id="2.40.30.20">
    <property type="match status" value="1"/>
</dbReference>
<dbReference type="Gene3D" id="1.20.150.20">
    <property type="entry name" value="ATP synthase alpha/beta chain, C-terminal domain"/>
    <property type="match status" value="1"/>
</dbReference>
<dbReference type="Gene3D" id="3.40.50.300">
    <property type="entry name" value="P-loop containing nucleotide triphosphate hydrolases"/>
    <property type="match status" value="1"/>
</dbReference>
<dbReference type="HAMAP" id="MF_01346">
    <property type="entry name" value="ATP_synth_alpha_bact"/>
    <property type="match status" value="1"/>
</dbReference>
<dbReference type="InterPro" id="IPR023366">
    <property type="entry name" value="ATP_synth_asu-like_sf"/>
</dbReference>
<dbReference type="InterPro" id="IPR000793">
    <property type="entry name" value="ATP_synth_asu_C"/>
</dbReference>
<dbReference type="InterPro" id="IPR038376">
    <property type="entry name" value="ATP_synth_asu_C_sf"/>
</dbReference>
<dbReference type="InterPro" id="IPR033732">
    <property type="entry name" value="ATP_synth_F1_a_nt-bd_dom"/>
</dbReference>
<dbReference type="InterPro" id="IPR005294">
    <property type="entry name" value="ATP_synth_F1_asu"/>
</dbReference>
<dbReference type="InterPro" id="IPR020003">
    <property type="entry name" value="ATPase_a/bsu_AS"/>
</dbReference>
<dbReference type="InterPro" id="IPR004100">
    <property type="entry name" value="ATPase_F1/V1/A1_a/bsu_N"/>
</dbReference>
<dbReference type="InterPro" id="IPR036121">
    <property type="entry name" value="ATPase_F1/V1/A1_a/bsu_N_sf"/>
</dbReference>
<dbReference type="InterPro" id="IPR000194">
    <property type="entry name" value="ATPase_F1/V1/A1_a/bsu_nucl-bd"/>
</dbReference>
<dbReference type="InterPro" id="IPR027417">
    <property type="entry name" value="P-loop_NTPase"/>
</dbReference>
<dbReference type="NCBIfam" id="TIGR00962">
    <property type="entry name" value="atpA"/>
    <property type="match status" value="1"/>
</dbReference>
<dbReference type="NCBIfam" id="NF009884">
    <property type="entry name" value="PRK13343.1"/>
    <property type="match status" value="1"/>
</dbReference>
<dbReference type="PANTHER" id="PTHR48082">
    <property type="entry name" value="ATP SYNTHASE SUBUNIT ALPHA, MITOCHONDRIAL"/>
    <property type="match status" value="1"/>
</dbReference>
<dbReference type="PANTHER" id="PTHR48082:SF2">
    <property type="entry name" value="ATP SYNTHASE SUBUNIT ALPHA, MITOCHONDRIAL"/>
    <property type="match status" value="1"/>
</dbReference>
<dbReference type="Pfam" id="PF00006">
    <property type="entry name" value="ATP-synt_ab"/>
    <property type="match status" value="1"/>
</dbReference>
<dbReference type="Pfam" id="PF00306">
    <property type="entry name" value="ATP-synt_ab_C"/>
    <property type="match status" value="1"/>
</dbReference>
<dbReference type="Pfam" id="PF02874">
    <property type="entry name" value="ATP-synt_ab_N"/>
    <property type="match status" value="1"/>
</dbReference>
<dbReference type="PIRSF" id="PIRSF039088">
    <property type="entry name" value="F_ATPase_subunit_alpha"/>
    <property type="match status" value="1"/>
</dbReference>
<dbReference type="SUPFAM" id="SSF47917">
    <property type="entry name" value="C-terminal domain of alpha and beta subunits of F1 ATP synthase"/>
    <property type="match status" value="1"/>
</dbReference>
<dbReference type="SUPFAM" id="SSF50615">
    <property type="entry name" value="N-terminal domain of alpha and beta subunits of F1 ATP synthase"/>
    <property type="match status" value="1"/>
</dbReference>
<dbReference type="SUPFAM" id="SSF52540">
    <property type="entry name" value="P-loop containing nucleoside triphosphate hydrolases"/>
    <property type="match status" value="1"/>
</dbReference>
<dbReference type="PROSITE" id="PS00152">
    <property type="entry name" value="ATPASE_ALPHA_BETA"/>
    <property type="match status" value="1"/>
</dbReference>
<protein>
    <recommendedName>
        <fullName evidence="1">ATP synthase subunit alpha</fullName>
        <ecNumber evidence="1">7.1.2.2</ecNumber>
    </recommendedName>
    <alternativeName>
        <fullName evidence="1">ATP synthase F1 sector subunit alpha</fullName>
    </alternativeName>
    <alternativeName>
        <fullName evidence="1">F-ATPase subunit alpha</fullName>
    </alternativeName>
</protein>
<reference key="1">
    <citation type="journal article" date="2008" name="DNA Res.">
        <title>Comparative genome analysis of Lactobacillus reuteri and Lactobacillus fermentum reveal a genomic island for reuterin and cobalamin production.</title>
        <authorList>
            <person name="Morita H."/>
            <person name="Toh H."/>
            <person name="Fukuda S."/>
            <person name="Horikawa H."/>
            <person name="Oshima K."/>
            <person name="Suzuki T."/>
            <person name="Murakami M."/>
            <person name="Hisamatsu S."/>
            <person name="Kato Y."/>
            <person name="Takizawa T."/>
            <person name="Fukuoka H."/>
            <person name="Yoshimura T."/>
            <person name="Itoh K."/>
            <person name="O'Sullivan D.J."/>
            <person name="McKay L.L."/>
            <person name="Ohno H."/>
            <person name="Kikuchi J."/>
            <person name="Masaoka T."/>
            <person name="Hattori M."/>
        </authorList>
    </citation>
    <scope>NUCLEOTIDE SEQUENCE [LARGE SCALE GENOMIC DNA]</scope>
    <source>
        <strain>JCM 1112</strain>
    </source>
</reference>
<gene>
    <name evidence="1" type="primary">atpA</name>
    <name type="ordered locus">LAR_0455</name>
</gene>
<name>ATPA_LIMRJ</name>
<feature type="chain" id="PRO_1000143399" description="ATP synthase subunit alpha">
    <location>
        <begin position="1"/>
        <end position="509"/>
    </location>
</feature>
<feature type="binding site" evidence="1">
    <location>
        <begin position="169"/>
        <end position="176"/>
    </location>
    <ligand>
        <name>ATP</name>
        <dbReference type="ChEBI" id="CHEBI:30616"/>
    </ligand>
</feature>
<feature type="site" description="Required for activity" evidence="1">
    <location>
        <position position="362"/>
    </location>
</feature>
<comment type="function">
    <text evidence="1">Produces ATP from ADP in the presence of a proton gradient across the membrane. The alpha chain is a regulatory subunit.</text>
</comment>
<comment type="catalytic activity">
    <reaction evidence="1">
        <text>ATP + H2O + 4 H(+)(in) = ADP + phosphate + 5 H(+)(out)</text>
        <dbReference type="Rhea" id="RHEA:57720"/>
        <dbReference type="ChEBI" id="CHEBI:15377"/>
        <dbReference type="ChEBI" id="CHEBI:15378"/>
        <dbReference type="ChEBI" id="CHEBI:30616"/>
        <dbReference type="ChEBI" id="CHEBI:43474"/>
        <dbReference type="ChEBI" id="CHEBI:456216"/>
        <dbReference type="EC" id="7.1.2.2"/>
    </reaction>
</comment>
<comment type="subunit">
    <text evidence="1">F-type ATPases have 2 components, CF(1) - the catalytic core - and CF(0) - the membrane proton channel. CF(1) has five subunits: alpha(3), beta(3), gamma(1), delta(1), epsilon(1). CF(0) has three main subunits: a(1), b(2) and c(9-12). The alpha and beta chains form an alternating ring which encloses part of the gamma chain. CF(1) is attached to CF(0) by a central stalk formed by the gamma and epsilon chains, while a peripheral stalk is formed by the delta and b chains.</text>
</comment>
<comment type="subcellular location">
    <subcellularLocation>
        <location evidence="1">Cell membrane</location>
        <topology evidence="1">Peripheral membrane protein</topology>
    </subcellularLocation>
</comment>
<comment type="similarity">
    <text evidence="1">Belongs to the ATPase alpha/beta chains family.</text>
</comment>